<accession>Q16655</accession>
<accession>Q6ICU4</accession>
<gene>
    <name type="primary">MLANA</name>
    <name type="synonym">MART1</name>
</gene>
<comment type="function">
    <text evidence="4 5">Involved in melanosome biogenesis by ensuring the stability of GPR143. Plays a vital role in the expression, stability, trafficking, and processing of melanocyte protein PMEL, which is critical to the formation of stage II melanosomes.</text>
</comment>
<comment type="subunit">
    <text evidence="4 5 6">Interacts with PMEL. Interacts with GPR143.</text>
</comment>
<comment type="interaction">
    <interactant intactId="EBI-2509726">
        <id>Q16655</id>
    </interactant>
    <interactant intactId="EBI-12135243">
        <id>O95208-2</id>
        <label>EPN2</label>
    </interactant>
    <organismsDiffer>false</organismsDiffer>
    <experiments>3</experiments>
</comment>
<comment type="interaction">
    <interactant intactId="EBI-2509726">
        <id>Q16655</id>
    </interactant>
    <interactant intactId="EBI-1564678">
        <id>Q96J02</id>
        <label>ITCH</label>
    </interactant>
    <organismsDiffer>false</organismsDiffer>
    <experiments>2</experiments>
</comment>
<comment type="interaction">
    <interactant intactId="EBI-2509726">
        <id>Q16655</id>
    </interactant>
    <interactant intactId="EBI-726944">
        <id>P46934</id>
        <label>NEDD4</label>
    </interactant>
    <organismsDiffer>false</organismsDiffer>
    <experiments>2</experiments>
</comment>
<comment type="subcellular location">
    <subcellularLocation>
        <location>Endoplasmic reticulum membrane</location>
        <topology>Single-pass type III membrane protein</topology>
    </subcellularLocation>
    <subcellularLocation>
        <location>Golgi apparatus</location>
    </subcellularLocation>
    <subcellularLocation>
        <location>Golgi apparatus</location>
        <location>trans-Golgi network membrane</location>
    </subcellularLocation>
    <subcellularLocation>
        <location>Melanosome</location>
    </subcellularLocation>
    <text>Also found in small vesicles and tubules dispersed over the entire cytoplasm. A small fraction of the protein is inserted into the membrane in an inverted orientation. Inversion of membrane topology results in the relocalization of the protein from a predominant Golgi/post-Golgi area to the endoplasmic reticulum. Melanoma cells expressing the protein with an inverted membrane topology are more effectively recognized by specific cytolytic T-lymphocytes than those expressing the protein in its native membrane orientation.</text>
</comment>
<comment type="tissue specificity">
    <text>Expression is restricted to melanoma and melanocyte cell lines and retina.</text>
</comment>
<comment type="PTM">
    <text evidence="3">Acylated.</text>
</comment>
<sequence>MPREDAHFIYGYPKKGHGHSYTTAEEAAGIGILTVILGVLLLIGCWYCRRRNGYRALMDKSLHVGTQCALTRRCPQEGFDHRDSKVSLQEKNCEPVVPNAPPAYEKLSAEQSPPPYSP</sequence>
<evidence type="ECO:0000255" key="1"/>
<evidence type="ECO:0000256" key="2">
    <source>
        <dbReference type="SAM" id="MobiDB-lite"/>
    </source>
</evidence>
<evidence type="ECO:0000269" key="3">
    <source>
    </source>
</evidence>
<evidence type="ECO:0000269" key="4">
    <source>
    </source>
</evidence>
<evidence type="ECO:0000269" key="5">
    <source>
    </source>
</evidence>
<evidence type="ECO:0000269" key="6">
    <source>
    </source>
</evidence>
<evidence type="ECO:0007829" key="7">
    <source>
        <dbReference type="PDB" id="2GTW"/>
    </source>
</evidence>
<dbReference type="EMBL" id="U06452">
    <property type="protein sequence ID" value="AAA19238.1"/>
    <property type="molecule type" value="mRNA"/>
</dbReference>
<dbReference type="EMBL" id="U06654">
    <property type="protein sequence ID" value="AAA20389.1"/>
    <property type="molecule type" value="mRNA"/>
</dbReference>
<dbReference type="EMBL" id="CR450299">
    <property type="protein sequence ID" value="CAG29295.1"/>
    <property type="molecule type" value="mRNA"/>
</dbReference>
<dbReference type="EMBL" id="AK312149">
    <property type="protein sequence ID" value="BAG35083.1"/>
    <property type="molecule type" value="mRNA"/>
</dbReference>
<dbReference type="EMBL" id="AL365360">
    <property type="status" value="NOT_ANNOTATED_CDS"/>
    <property type="molecule type" value="Genomic_DNA"/>
</dbReference>
<dbReference type="EMBL" id="CH471071">
    <property type="protein sequence ID" value="EAW58755.1"/>
    <property type="molecule type" value="Genomic_DNA"/>
</dbReference>
<dbReference type="EMBL" id="CH471071">
    <property type="protein sequence ID" value="EAW58756.1"/>
    <property type="molecule type" value="Genomic_DNA"/>
</dbReference>
<dbReference type="EMBL" id="BC014423">
    <property type="protein sequence ID" value="AAH14423.1"/>
    <property type="molecule type" value="mRNA"/>
</dbReference>
<dbReference type="CCDS" id="CCDS6466.1"/>
<dbReference type="PIR" id="A55253">
    <property type="entry name" value="A55253"/>
</dbReference>
<dbReference type="RefSeq" id="NP_005502.1">
    <property type="nucleotide sequence ID" value="NM_005511.2"/>
</dbReference>
<dbReference type="PDB" id="2GT9">
    <property type="method" value="X-ray"/>
    <property type="resolution" value="1.75 A"/>
    <property type="chains" value="C/F=26-35"/>
</dbReference>
<dbReference type="PDB" id="2GTW">
    <property type="method" value="X-ray"/>
    <property type="resolution" value="1.55 A"/>
    <property type="chains" value="C/F=27-35"/>
</dbReference>
<dbReference type="PDB" id="2GTZ">
    <property type="method" value="X-ray"/>
    <property type="resolution" value="1.70 A"/>
    <property type="chains" value="C/F=27-35"/>
</dbReference>
<dbReference type="PDB" id="2GUO">
    <property type="method" value="X-ray"/>
    <property type="resolution" value="1.90 A"/>
    <property type="chains" value="C/F=27-35"/>
</dbReference>
<dbReference type="PDB" id="3HG1">
    <property type="method" value="X-ray"/>
    <property type="resolution" value="3.00 A"/>
    <property type="chains" value="C=26-35"/>
</dbReference>
<dbReference type="PDB" id="3L6F">
    <property type="method" value="X-ray"/>
    <property type="resolution" value="2.10 A"/>
    <property type="chains" value="C=100-114"/>
</dbReference>
<dbReference type="PDB" id="3MRO">
    <property type="method" value="X-ray"/>
    <property type="resolution" value="2.35 A"/>
    <property type="chains" value="P=26-35"/>
</dbReference>
<dbReference type="PDB" id="3MRP">
    <property type="method" value="X-ray"/>
    <property type="resolution" value="2.10 A"/>
    <property type="chains" value="P=26-35"/>
</dbReference>
<dbReference type="PDB" id="3MRQ">
    <property type="method" value="X-ray"/>
    <property type="resolution" value="2.20 A"/>
    <property type="chains" value="P=26-35"/>
</dbReference>
<dbReference type="PDB" id="3QDM">
    <property type="method" value="X-ray"/>
    <property type="resolution" value="2.80 A"/>
    <property type="chains" value="C=26-35"/>
</dbReference>
<dbReference type="PDB" id="3QEQ">
    <property type="method" value="X-ray"/>
    <property type="resolution" value="2.59 A"/>
    <property type="chains" value="C=27-35"/>
</dbReference>
<dbReference type="PDB" id="3QFD">
    <property type="method" value="X-ray"/>
    <property type="resolution" value="1.68 A"/>
    <property type="chains" value="C/F=27-35"/>
</dbReference>
<dbReference type="PDB" id="4EUP">
    <property type="method" value="X-ray"/>
    <property type="resolution" value="2.88 A"/>
    <property type="chains" value="C/F=27-35"/>
</dbReference>
<dbReference type="PDB" id="4JFF">
    <property type="method" value="X-ray"/>
    <property type="resolution" value="2.43 A"/>
    <property type="chains" value="C=26-35"/>
</dbReference>
<dbReference type="PDB" id="4L3E">
    <property type="method" value="X-ray"/>
    <property type="resolution" value="2.56 A"/>
    <property type="chains" value="C=26-35"/>
</dbReference>
<dbReference type="PDB" id="4QOK">
    <property type="method" value="X-ray"/>
    <property type="resolution" value="3.00 A"/>
    <property type="chains" value="C=26-35"/>
</dbReference>
<dbReference type="PDB" id="4WJ5">
    <property type="method" value="X-ray"/>
    <property type="resolution" value="1.65 A"/>
    <property type="chains" value="C/F=28-34"/>
</dbReference>
<dbReference type="PDB" id="5E9D">
    <property type="method" value="X-ray"/>
    <property type="resolution" value="2.51 A"/>
    <property type="chains" value="C/H=26-35"/>
</dbReference>
<dbReference type="PDB" id="5NHT">
    <property type="method" value="X-ray"/>
    <property type="resolution" value="3.20 A"/>
    <property type="chains" value="P=26-35"/>
</dbReference>
<dbReference type="PDB" id="5NQK">
    <property type="method" value="X-ray"/>
    <property type="resolution" value="3.25 A"/>
    <property type="chains" value="P=26-35"/>
</dbReference>
<dbReference type="PDB" id="6D78">
    <property type="method" value="X-ray"/>
    <property type="resolution" value="2.35 A"/>
    <property type="chains" value="C=27-35"/>
</dbReference>
<dbReference type="PDB" id="6DKP">
    <property type="method" value="X-ray"/>
    <property type="resolution" value="2.97 A"/>
    <property type="chains" value="C=26-35"/>
</dbReference>
<dbReference type="PDB" id="6TMO">
    <property type="method" value="X-ray"/>
    <property type="resolution" value="2.10 A"/>
    <property type="chains" value="C=26-35"/>
</dbReference>
<dbReference type="PDB" id="7Q9B">
    <property type="method" value="X-ray"/>
    <property type="resolution" value="3.24 A"/>
    <property type="chains" value="CCC/HHH=26-35"/>
</dbReference>
<dbReference type="PDB" id="7TR4">
    <property type="method" value="X-ray"/>
    <property type="resolution" value="2.30 A"/>
    <property type="chains" value="P=26-35"/>
</dbReference>
<dbReference type="PDBsum" id="2GT9"/>
<dbReference type="PDBsum" id="2GTW"/>
<dbReference type="PDBsum" id="2GTZ"/>
<dbReference type="PDBsum" id="2GUO"/>
<dbReference type="PDBsum" id="3HG1"/>
<dbReference type="PDBsum" id="3L6F"/>
<dbReference type="PDBsum" id="3MRO"/>
<dbReference type="PDBsum" id="3MRP"/>
<dbReference type="PDBsum" id="3MRQ"/>
<dbReference type="PDBsum" id="3QDM"/>
<dbReference type="PDBsum" id="3QEQ"/>
<dbReference type="PDBsum" id="3QFD"/>
<dbReference type="PDBsum" id="4EUP"/>
<dbReference type="PDBsum" id="4JFF"/>
<dbReference type="PDBsum" id="4L3E"/>
<dbReference type="PDBsum" id="4QOK"/>
<dbReference type="PDBsum" id="4WJ5"/>
<dbReference type="PDBsum" id="5E9D"/>
<dbReference type="PDBsum" id="5NHT"/>
<dbReference type="PDBsum" id="5NQK"/>
<dbReference type="PDBsum" id="6D78"/>
<dbReference type="PDBsum" id="6DKP"/>
<dbReference type="PDBsum" id="6TMO"/>
<dbReference type="PDBsum" id="7Q9B"/>
<dbReference type="PDBsum" id="7TR4"/>
<dbReference type="SMR" id="Q16655"/>
<dbReference type="BioGRID" id="108604">
    <property type="interactions" value="5"/>
</dbReference>
<dbReference type="FunCoup" id="Q16655">
    <property type="interactions" value="19"/>
</dbReference>
<dbReference type="IntAct" id="Q16655">
    <property type="interactions" value="5"/>
</dbReference>
<dbReference type="MINT" id="Q16655"/>
<dbReference type="STRING" id="9606.ENSP00000370886"/>
<dbReference type="GlyGen" id="Q16655">
    <property type="glycosylation" value="1 site, 1 O-linked glycan (1 site)"/>
</dbReference>
<dbReference type="iPTMnet" id="Q16655"/>
<dbReference type="PhosphoSitePlus" id="Q16655"/>
<dbReference type="SwissPalm" id="Q16655"/>
<dbReference type="BioMuta" id="MLANA"/>
<dbReference type="DMDM" id="2833278"/>
<dbReference type="jPOST" id="Q16655"/>
<dbReference type="MassIVE" id="Q16655"/>
<dbReference type="PaxDb" id="9606-ENSP00000370886"/>
<dbReference type="PeptideAtlas" id="Q16655"/>
<dbReference type="ProteomicsDB" id="61014"/>
<dbReference type="ABCD" id="Q16655">
    <property type="antibodies" value="7 sequenced antibodies"/>
</dbReference>
<dbReference type="Antibodypedia" id="3661">
    <property type="antibodies" value="2470 antibodies from 49 providers"/>
</dbReference>
<dbReference type="DNASU" id="2315"/>
<dbReference type="Ensembl" id="ENST00000381471.1">
    <property type="protein sequence ID" value="ENSP00000370880.1"/>
    <property type="gene ID" value="ENSG00000120215.10"/>
</dbReference>
<dbReference type="Ensembl" id="ENST00000381476.5">
    <property type="protein sequence ID" value="ENSP00000370885.1"/>
    <property type="gene ID" value="ENSG00000120215.10"/>
</dbReference>
<dbReference type="Ensembl" id="ENST00000381477.8">
    <property type="protein sequence ID" value="ENSP00000370886.3"/>
    <property type="gene ID" value="ENSG00000120215.10"/>
</dbReference>
<dbReference type="GeneID" id="2315"/>
<dbReference type="KEGG" id="hsa:2315"/>
<dbReference type="MANE-Select" id="ENST00000381477.8">
    <property type="protein sequence ID" value="ENSP00000370886.3"/>
    <property type="RefSeq nucleotide sequence ID" value="NM_005511.2"/>
    <property type="RefSeq protein sequence ID" value="NP_005502.1"/>
</dbReference>
<dbReference type="UCSC" id="uc003zjo.2">
    <property type="organism name" value="human"/>
</dbReference>
<dbReference type="AGR" id="HGNC:7124"/>
<dbReference type="CTD" id="2315"/>
<dbReference type="DisGeNET" id="2315"/>
<dbReference type="GeneCards" id="MLANA"/>
<dbReference type="HGNC" id="HGNC:7124">
    <property type="gene designation" value="MLANA"/>
</dbReference>
<dbReference type="HPA" id="ENSG00000120215">
    <property type="expression patterns" value="Tissue enriched (skin)"/>
</dbReference>
<dbReference type="MIM" id="605513">
    <property type="type" value="gene"/>
</dbReference>
<dbReference type="neXtProt" id="NX_Q16655"/>
<dbReference type="OpenTargets" id="ENSG00000120215"/>
<dbReference type="PharmGKB" id="PA30842"/>
<dbReference type="VEuPathDB" id="HostDB:ENSG00000120215"/>
<dbReference type="eggNOG" id="ENOG502S51B">
    <property type="taxonomic scope" value="Eukaryota"/>
</dbReference>
<dbReference type="GeneTree" id="ENSGT00390000009531"/>
<dbReference type="HOGENOM" id="CLU_167667_0_0_1"/>
<dbReference type="InParanoid" id="Q16655"/>
<dbReference type="OMA" id="YPKKGHN"/>
<dbReference type="OrthoDB" id="9946040at2759"/>
<dbReference type="PAN-GO" id="Q16655">
    <property type="GO annotations" value="3 GO annotations based on evolutionary models"/>
</dbReference>
<dbReference type="PhylomeDB" id="Q16655"/>
<dbReference type="TreeFam" id="TF338577"/>
<dbReference type="PathwayCommons" id="Q16655"/>
<dbReference type="Reactome" id="R-HSA-9824585">
    <property type="pathway name" value="Regulation of MITF-M-dependent genes involved in pigmentation"/>
</dbReference>
<dbReference type="SignaLink" id="Q16655"/>
<dbReference type="SIGNOR" id="Q16655"/>
<dbReference type="BioGRID-ORCS" id="2315">
    <property type="hits" value="11 hits in 1137 CRISPR screens"/>
</dbReference>
<dbReference type="ChiTaRS" id="MLANA">
    <property type="organism name" value="human"/>
</dbReference>
<dbReference type="EvolutionaryTrace" id="Q16655"/>
<dbReference type="GeneWiki" id="MLANA"/>
<dbReference type="GenomeRNAi" id="2315"/>
<dbReference type="Pharos" id="Q16655">
    <property type="development level" value="Tbio"/>
</dbReference>
<dbReference type="PRO" id="PR:Q16655"/>
<dbReference type="Proteomes" id="UP000005640">
    <property type="component" value="Chromosome 9"/>
</dbReference>
<dbReference type="RNAct" id="Q16655">
    <property type="molecule type" value="protein"/>
</dbReference>
<dbReference type="Bgee" id="ENSG00000120215">
    <property type="expression patterns" value="Expressed in upper leg skin and 107 other cell types or tissues"/>
</dbReference>
<dbReference type="ExpressionAtlas" id="Q16655">
    <property type="expression patterns" value="baseline and differential"/>
</dbReference>
<dbReference type="GO" id="GO:0005789">
    <property type="term" value="C:endoplasmic reticulum membrane"/>
    <property type="evidence" value="ECO:0000314"/>
    <property type="project" value="UniProtKB"/>
</dbReference>
<dbReference type="GO" id="GO:0005794">
    <property type="term" value="C:Golgi apparatus"/>
    <property type="evidence" value="ECO:0000314"/>
    <property type="project" value="UniProtKB"/>
</dbReference>
<dbReference type="GO" id="GO:0042470">
    <property type="term" value="C:melanosome"/>
    <property type="evidence" value="ECO:0000314"/>
    <property type="project" value="UniProtKB"/>
</dbReference>
<dbReference type="GO" id="GO:0033162">
    <property type="term" value="C:melanosome membrane"/>
    <property type="evidence" value="ECO:0000304"/>
    <property type="project" value="Reactome"/>
</dbReference>
<dbReference type="GO" id="GO:0005886">
    <property type="term" value="C:plasma membrane"/>
    <property type="evidence" value="ECO:0000304"/>
    <property type="project" value="ProtInc"/>
</dbReference>
<dbReference type="GO" id="GO:0005802">
    <property type="term" value="C:trans-Golgi network"/>
    <property type="evidence" value="ECO:0000314"/>
    <property type="project" value="UniProtKB"/>
</dbReference>
<dbReference type="InterPro" id="IPR029242">
    <property type="entry name" value="MLANA"/>
</dbReference>
<dbReference type="PANTHER" id="PTHR15305">
    <property type="entry name" value="MELANOMA ANTIGEN RECOGNIZED BY T-CELLS 1"/>
    <property type="match status" value="1"/>
</dbReference>
<dbReference type="PANTHER" id="PTHR15305:SF0">
    <property type="entry name" value="MELANOMA ANTIGEN RECOGNIZED BY T-CELLS 1"/>
    <property type="match status" value="1"/>
</dbReference>
<dbReference type="Pfam" id="PF14991">
    <property type="entry name" value="MLANA"/>
    <property type="match status" value="1"/>
</dbReference>
<keyword id="KW-0002">3D-structure</keyword>
<keyword id="KW-0256">Endoplasmic reticulum</keyword>
<keyword id="KW-0333">Golgi apparatus</keyword>
<keyword id="KW-0472">Membrane</keyword>
<keyword id="KW-0597">Phosphoprotein</keyword>
<keyword id="KW-1267">Proteomics identification</keyword>
<keyword id="KW-1185">Reference proteome</keyword>
<keyword id="KW-0812">Transmembrane</keyword>
<keyword id="KW-1133">Transmembrane helix</keyword>
<feature type="chain" id="PRO_0000096238" description="Melanoma antigen recognized by T-cells 1">
    <location>
        <begin position="1"/>
        <end position="118"/>
    </location>
</feature>
<feature type="transmembrane region" description="Helical" evidence="1">
    <location>
        <begin position="27"/>
        <end position="47"/>
    </location>
</feature>
<feature type="topological domain" description="Cytoplasmic" evidence="1">
    <location>
        <begin position="48"/>
        <end position="118"/>
    </location>
</feature>
<feature type="region of interest" description="Disordered" evidence="2">
    <location>
        <begin position="78"/>
        <end position="118"/>
    </location>
</feature>
<feature type="modified residue" description="Phosphoserine" evidence="6">
    <location>
        <position position="108"/>
    </location>
</feature>
<feature type="strand" evidence="7">
    <location>
        <begin position="29"/>
        <end position="31"/>
    </location>
</feature>
<name>MAR1_HUMAN</name>
<organism>
    <name type="scientific">Homo sapiens</name>
    <name type="common">Human</name>
    <dbReference type="NCBI Taxonomy" id="9606"/>
    <lineage>
        <taxon>Eukaryota</taxon>
        <taxon>Metazoa</taxon>
        <taxon>Chordata</taxon>
        <taxon>Craniata</taxon>
        <taxon>Vertebrata</taxon>
        <taxon>Euteleostomi</taxon>
        <taxon>Mammalia</taxon>
        <taxon>Eutheria</taxon>
        <taxon>Euarchontoglires</taxon>
        <taxon>Primates</taxon>
        <taxon>Haplorrhini</taxon>
        <taxon>Catarrhini</taxon>
        <taxon>Hominidae</taxon>
        <taxon>Homo</taxon>
    </lineage>
</organism>
<protein>
    <recommendedName>
        <fullName>Melanoma antigen recognized by T-cells 1</fullName>
        <shortName>MART-1</shortName>
    </recommendedName>
    <alternativeName>
        <fullName>Antigen LB39-AA</fullName>
    </alternativeName>
    <alternativeName>
        <fullName>Antigen SK29-AA</fullName>
    </alternativeName>
    <alternativeName>
        <fullName>Protein Melan-A</fullName>
    </alternativeName>
</protein>
<reference key="1">
    <citation type="journal article" date="1994" name="Proc. Natl. Acad. Sci. U.S.A.">
        <title>Cloning of the gene coding for a shared human melanoma antigen recognized by autologous T cells infiltrating into tumor.</title>
        <authorList>
            <person name="Kawakami Y."/>
            <person name="Eliyahu S."/>
            <person name="Delgado C.H."/>
            <person name="Robbins P.F."/>
            <person name="Rivoltini L."/>
            <person name="Topalian S.L."/>
            <person name="Miki T."/>
            <person name="Rosenberg S.A."/>
        </authorList>
    </citation>
    <scope>NUCLEOTIDE SEQUENCE [MRNA]</scope>
    <source>
        <tissue>Melanoma</tissue>
    </source>
</reference>
<reference key="2">
    <citation type="journal article" date="1994" name="J. Exp. Med.">
        <title>A new gene coding for a differentiation antigen recognized by autologous cytolytic T lymphocytes on HLA-A2 melanomas.</title>
        <authorList>
            <person name="Coulie P.G."/>
            <person name="Brichard V."/>
            <person name="van Pel A."/>
            <person name="Woelfel T."/>
            <person name="Schneider J."/>
            <person name="Traversari C."/>
            <person name="Mattei S."/>
            <person name="de Plaen E."/>
            <person name="Lurquin C."/>
            <person name="Szikora J.-P."/>
            <person name="Renauld J.-C."/>
            <person name="Boon T."/>
        </authorList>
    </citation>
    <scope>NUCLEOTIDE SEQUENCE [MRNA]</scope>
</reference>
<reference key="3">
    <citation type="journal article" date="2004" name="Nat. Genet.">
        <title>Complete sequencing and characterization of 21,243 full-length human cDNAs.</title>
        <authorList>
            <person name="Ota T."/>
            <person name="Suzuki Y."/>
            <person name="Nishikawa T."/>
            <person name="Otsuki T."/>
            <person name="Sugiyama T."/>
            <person name="Irie R."/>
            <person name="Wakamatsu A."/>
            <person name="Hayashi K."/>
            <person name="Sato H."/>
            <person name="Nagai K."/>
            <person name="Kimura K."/>
            <person name="Makita H."/>
            <person name="Sekine M."/>
            <person name="Obayashi M."/>
            <person name="Nishi T."/>
            <person name="Shibahara T."/>
            <person name="Tanaka T."/>
            <person name="Ishii S."/>
            <person name="Yamamoto J."/>
            <person name="Saito K."/>
            <person name="Kawai Y."/>
            <person name="Isono Y."/>
            <person name="Nakamura Y."/>
            <person name="Nagahari K."/>
            <person name="Murakami K."/>
            <person name="Yasuda T."/>
            <person name="Iwayanagi T."/>
            <person name="Wagatsuma M."/>
            <person name="Shiratori A."/>
            <person name="Sudo H."/>
            <person name="Hosoiri T."/>
            <person name="Kaku Y."/>
            <person name="Kodaira H."/>
            <person name="Kondo H."/>
            <person name="Sugawara M."/>
            <person name="Takahashi M."/>
            <person name="Kanda K."/>
            <person name="Yokoi T."/>
            <person name="Furuya T."/>
            <person name="Kikkawa E."/>
            <person name="Omura Y."/>
            <person name="Abe K."/>
            <person name="Kamihara K."/>
            <person name="Katsuta N."/>
            <person name="Sato K."/>
            <person name="Tanikawa M."/>
            <person name="Yamazaki M."/>
            <person name="Ninomiya K."/>
            <person name="Ishibashi T."/>
            <person name="Yamashita H."/>
            <person name="Murakawa K."/>
            <person name="Fujimori K."/>
            <person name="Tanai H."/>
            <person name="Kimata M."/>
            <person name="Watanabe M."/>
            <person name="Hiraoka S."/>
            <person name="Chiba Y."/>
            <person name="Ishida S."/>
            <person name="Ono Y."/>
            <person name="Takiguchi S."/>
            <person name="Watanabe S."/>
            <person name="Yosida M."/>
            <person name="Hotuta T."/>
            <person name="Kusano J."/>
            <person name="Kanehori K."/>
            <person name="Takahashi-Fujii A."/>
            <person name="Hara H."/>
            <person name="Tanase T.-O."/>
            <person name="Nomura Y."/>
            <person name="Togiya S."/>
            <person name="Komai F."/>
            <person name="Hara R."/>
            <person name="Takeuchi K."/>
            <person name="Arita M."/>
            <person name="Imose N."/>
            <person name="Musashino K."/>
            <person name="Yuuki H."/>
            <person name="Oshima A."/>
            <person name="Sasaki N."/>
            <person name="Aotsuka S."/>
            <person name="Yoshikawa Y."/>
            <person name="Matsunawa H."/>
            <person name="Ichihara T."/>
            <person name="Shiohata N."/>
            <person name="Sano S."/>
            <person name="Moriya S."/>
            <person name="Momiyama H."/>
            <person name="Satoh N."/>
            <person name="Takami S."/>
            <person name="Terashima Y."/>
            <person name="Suzuki O."/>
            <person name="Nakagawa S."/>
            <person name="Senoh A."/>
            <person name="Mizoguchi H."/>
            <person name="Goto Y."/>
            <person name="Shimizu F."/>
            <person name="Wakebe H."/>
            <person name="Hishigaki H."/>
            <person name="Watanabe T."/>
            <person name="Sugiyama A."/>
            <person name="Takemoto M."/>
            <person name="Kawakami B."/>
            <person name="Yamazaki M."/>
            <person name="Watanabe K."/>
            <person name="Kumagai A."/>
            <person name="Itakura S."/>
            <person name="Fukuzumi Y."/>
            <person name="Fujimori Y."/>
            <person name="Komiyama M."/>
            <person name="Tashiro H."/>
            <person name="Tanigami A."/>
            <person name="Fujiwara T."/>
            <person name="Ono T."/>
            <person name="Yamada K."/>
            <person name="Fujii Y."/>
            <person name="Ozaki K."/>
            <person name="Hirao M."/>
            <person name="Ohmori Y."/>
            <person name="Kawabata A."/>
            <person name="Hikiji T."/>
            <person name="Kobatake N."/>
            <person name="Inagaki H."/>
            <person name="Ikema Y."/>
            <person name="Okamoto S."/>
            <person name="Okitani R."/>
            <person name="Kawakami T."/>
            <person name="Noguchi S."/>
            <person name="Itoh T."/>
            <person name="Shigeta K."/>
            <person name="Senba T."/>
            <person name="Matsumura K."/>
            <person name="Nakajima Y."/>
            <person name="Mizuno T."/>
            <person name="Morinaga M."/>
            <person name="Sasaki M."/>
            <person name="Togashi T."/>
            <person name="Oyama M."/>
            <person name="Hata H."/>
            <person name="Watanabe M."/>
            <person name="Komatsu T."/>
            <person name="Mizushima-Sugano J."/>
            <person name="Satoh T."/>
            <person name="Shirai Y."/>
            <person name="Takahashi Y."/>
            <person name="Nakagawa K."/>
            <person name="Okumura K."/>
            <person name="Nagase T."/>
            <person name="Nomura N."/>
            <person name="Kikuchi H."/>
            <person name="Masuho Y."/>
            <person name="Yamashita R."/>
            <person name="Nakai K."/>
            <person name="Yada T."/>
            <person name="Nakamura Y."/>
            <person name="Ohara O."/>
            <person name="Isogai T."/>
            <person name="Sugano S."/>
        </authorList>
    </citation>
    <scope>NUCLEOTIDE SEQUENCE [LARGE SCALE MRNA]</scope>
    <source>
        <tissue>Amygdala</tissue>
    </source>
</reference>
<reference key="4">
    <citation type="submission" date="2004-05" db="EMBL/GenBank/DDBJ databases">
        <title>Cloning of human full open reading frames in Gateway(TM) system entry vector (pDONR201).</title>
        <authorList>
            <person name="Ebert L."/>
            <person name="Schick M."/>
            <person name="Neubert P."/>
            <person name="Schatten R."/>
            <person name="Henze S."/>
            <person name="Korn B."/>
        </authorList>
    </citation>
    <scope>NUCLEOTIDE SEQUENCE [LARGE SCALE MRNA]</scope>
</reference>
<reference key="5">
    <citation type="journal article" date="2004" name="Nature">
        <title>DNA sequence and analysis of human chromosome 9.</title>
        <authorList>
            <person name="Humphray S.J."/>
            <person name="Oliver K."/>
            <person name="Hunt A.R."/>
            <person name="Plumb R.W."/>
            <person name="Loveland J.E."/>
            <person name="Howe K.L."/>
            <person name="Andrews T.D."/>
            <person name="Searle S."/>
            <person name="Hunt S.E."/>
            <person name="Scott C.E."/>
            <person name="Jones M.C."/>
            <person name="Ainscough R."/>
            <person name="Almeida J.P."/>
            <person name="Ambrose K.D."/>
            <person name="Ashwell R.I.S."/>
            <person name="Babbage A.K."/>
            <person name="Babbage S."/>
            <person name="Bagguley C.L."/>
            <person name="Bailey J."/>
            <person name="Banerjee R."/>
            <person name="Barker D.J."/>
            <person name="Barlow K.F."/>
            <person name="Bates K."/>
            <person name="Beasley H."/>
            <person name="Beasley O."/>
            <person name="Bird C.P."/>
            <person name="Bray-Allen S."/>
            <person name="Brown A.J."/>
            <person name="Brown J.Y."/>
            <person name="Burford D."/>
            <person name="Burrill W."/>
            <person name="Burton J."/>
            <person name="Carder C."/>
            <person name="Carter N.P."/>
            <person name="Chapman J.C."/>
            <person name="Chen Y."/>
            <person name="Clarke G."/>
            <person name="Clark S.Y."/>
            <person name="Clee C.M."/>
            <person name="Clegg S."/>
            <person name="Collier R.E."/>
            <person name="Corby N."/>
            <person name="Crosier M."/>
            <person name="Cummings A.T."/>
            <person name="Davies J."/>
            <person name="Dhami P."/>
            <person name="Dunn M."/>
            <person name="Dutta I."/>
            <person name="Dyer L.W."/>
            <person name="Earthrowl M.E."/>
            <person name="Faulkner L."/>
            <person name="Fleming C.J."/>
            <person name="Frankish A."/>
            <person name="Frankland J.A."/>
            <person name="French L."/>
            <person name="Fricker D.G."/>
            <person name="Garner P."/>
            <person name="Garnett J."/>
            <person name="Ghori J."/>
            <person name="Gilbert J.G.R."/>
            <person name="Glison C."/>
            <person name="Grafham D.V."/>
            <person name="Gribble S."/>
            <person name="Griffiths C."/>
            <person name="Griffiths-Jones S."/>
            <person name="Grocock R."/>
            <person name="Guy J."/>
            <person name="Hall R.E."/>
            <person name="Hammond S."/>
            <person name="Harley J.L."/>
            <person name="Harrison E.S.I."/>
            <person name="Hart E.A."/>
            <person name="Heath P.D."/>
            <person name="Henderson C.D."/>
            <person name="Hopkins B.L."/>
            <person name="Howard P.J."/>
            <person name="Howden P.J."/>
            <person name="Huckle E."/>
            <person name="Johnson C."/>
            <person name="Johnson D."/>
            <person name="Joy A.A."/>
            <person name="Kay M."/>
            <person name="Keenan S."/>
            <person name="Kershaw J.K."/>
            <person name="Kimberley A.M."/>
            <person name="King A."/>
            <person name="Knights A."/>
            <person name="Laird G.K."/>
            <person name="Langford C."/>
            <person name="Lawlor S."/>
            <person name="Leongamornlert D.A."/>
            <person name="Leversha M."/>
            <person name="Lloyd C."/>
            <person name="Lloyd D.M."/>
            <person name="Lovell J."/>
            <person name="Martin S."/>
            <person name="Mashreghi-Mohammadi M."/>
            <person name="Matthews L."/>
            <person name="McLaren S."/>
            <person name="McLay K.E."/>
            <person name="McMurray A."/>
            <person name="Milne S."/>
            <person name="Nickerson T."/>
            <person name="Nisbett J."/>
            <person name="Nordsiek G."/>
            <person name="Pearce A.V."/>
            <person name="Peck A.I."/>
            <person name="Porter K.M."/>
            <person name="Pandian R."/>
            <person name="Pelan S."/>
            <person name="Phillimore B."/>
            <person name="Povey S."/>
            <person name="Ramsey Y."/>
            <person name="Rand V."/>
            <person name="Scharfe M."/>
            <person name="Sehra H.K."/>
            <person name="Shownkeen R."/>
            <person name="Sims S.K."/>
            <person name="Skuce C.D."/>
            <person name="Smith M."/>
            <person name="Steward C.A."/>
            <person name="Swarbreck D."/>
            <person name="Sycamore N."/>
            <person name="Tester J."/>
            <person name="Thorpe A."/>
            <person name="Tracey A."/>
            <person name="Tromans A."/>
            <person name="Thomas D.W."/>
            <person name="Wall M."/>
            <person name="Wallis J.M."/>
            <person name="West A.P."/>
            <person name="Whitehead S.L."/>
            <person name="Willey D.L."/>
            <person name="Williams S.A."/>
            <person name="Wilming L."/>
            <person name="Wray P.W."/>
            <person name="Young L."/>
            <person name="Ashurst J.L."/>
            <person name="Coulson A."/>
            <person name="Blocker H."/>
            <person name="Durbin R.M."/>
            <person name="Sulston J.E."/>
            <person name="Hubbard T."/>
            <person name="Jackson M.J."/>
            <person name="Bentley D.R."/>
            <person name="Beck S."/>
            <person name="Rogers J."/>
            <person name="Dunham I."/>
        </authorList>
    </citation>
    <scope>NUCLEOTIDE SEQUENCE [LARGE SCALE GENOMIC DNA]</scope>
</reference>
<reference key="6">
    <citation type="submission" date="2005-09" db="EMBL/GenBank/DDBJ databases">
        <authorList>
            <person name="Mural R.J."/>
            <person name="Istrail S."/>
            <person name="Sutton G."/>
            <person name="Florea L."/>
            <person name="Halpern A.L."/>
            <person name="Mobarry C.M."/>
            <person name="Lippert R."/>
            <person name="Walenz B."/>
            <person name="Shatkay H."/>
            <person name="Dew I."/>
            <person name="Miller J.R."/>
            <person name="Flanigan M.J."/>
            <person name="Edwards N.J."/>
            <person name="Bolanos R."/>
            <person name="Fasulo D."/>
            <person name="Halldorsson B.V."/>
            <person name="Hannenhalli S."/>
            <person name="Turner R."/>
            <person name="Yooseph S."/>
            <person name="Lu F."/>
            <person name="Nusskern D.R."/>
            <person name="Shue B.C."/>
            <person name="Zheng X.H."/>
            <person name="Zhong F."/>
            <person name="Delcher A.L."/>
            <person name="Huson D.H."/>
            <person name="Kravitz S.A."/>
            <person name="Mouchard L."/>
            <person name="Reinert K."/>
            <person name="Remington K.A."/>
            <person name="Clark A.G."/>
            <person name="Waterman M.S."/>
            <person name="Eichler E.E."/>
            <person name="Adams M.D."/>
            <person name="Hunkapiller M.W."/>
            <person name="Myers E.W."/>
            <person name="Venter J.C."/>
        </authorList>
    </citation>
    <scope>NUCLEOTIDE SEQUENCE [LARGE SCALE GENOMIC DNA]</scope>
</reference>
<reference key="7">
    <citation type="journal article" date="2004" name="Genome Res.">
        <title>The status, quality, and expansion of the NIH full-length cDNA project: the Mammalian Gene Collection (MGC).</title>
        <authorList>
            <consortium name="The MGC Project Team"/>
        </authorList>
    </citation>
    <scope>NUCLEOTIDE SEQUENCE [LARGE SCALE MRNA]</scope>
    <source>
        <tissue>Skin</tissue>
    </source>
</reference>
<reference key="8">
    <citation type="journal article" date="2001" name="J. Biol. Chem.">
        <title>Subcellular localization of the melanoma-associated protein Melan-AMART-1 influences the processing of its HLA-A2-restricted epitope.</title>
        <authorList>
            <person name="Rimoldi D."/>
            <person name="Muehlethaler K."/>
            <person name="Salvi S."/>
            <person name="Valmori D."/>
            <person name="Romero P."/>
            <person name="Cerottini J.C."/>
            <person name="Levy F."/>
        </authorList>
    </citation>
    <scope>SUBCELLULAR LOCATION</scope>
</reference>
<reference key="9">
    <citation type="journal article" date="2002" name="Traffic">
        <title>The melanocytic protein Melan-A/MART-1 has a subcellular localization distinct from typical melanosomal proteins.</title>
        <authorList>
            <person name="De Maziere A.M."/>
            <person name="Muehlethaler K."/>
            <person name="van Donselaar E."/>
            <person name="Salvi S."/>
            <person name="Davoust J."/>
            <person name="Cerottini J.-C."/>
            <person name="Levy F."/>
            <person name="Slot J.W."/>
            <person name="Rimoldi D."/>
        </authorList>
    </citation>
    <scope>SUBCELLULAR LOCATION</scope>
</reference>
<reference key="10">
    <citation type="journal article" date="2005" name="J. Biol. Chem.">
        <title>MART-1 is required for the function of the melanosomal matrix protein PMEL17/GP100 and the maturation of melanosomes.</title>
        <authorList>
            <person name="Hoashi T."/>
            <person name="Watabe H."/>
            <person name="Muller J."/>
            <person name="Yamaguchi Y."/>
            <person name="Vieira W.D."/>
            <person name="Hearing V.J."/>
        </authorList>
    </citation>
    <scope>FUNCTION</scope>
    <scope>SUBCELLULAR LOCATION</scope>
    <scope>INTERACTION WITH SILV</scope>
</reference>
<reference key="11">
    <citation type="journal article" date="2009" name="Hum. Mol. Genet.">
        <title>The ocular albinism type 1 (OA1) G-protein-coupled receptor functions with MART-1 at early stages of melanogenesis to control melanosome identity and composition.</title>
        <authorList>
            <person name="Giordano F."/>
            <person name="Bonetti C."/>
            <person name="Surace E.M."/>
            <person name="Marigo V."/>
            <person name="Raposo G."/>
        </authorList>
    </citation>
    <scope>FUNCTION</scope>
    <scope>INTERACTION WITH GPR143</scope>
</reference>
<reference key="12">
    <citation type="journal article" date="2010" name="J. Mol. Biol.">
        <title>Structural basis for the presentation of tumor-associated MHC class II-restricted phosphopeptides to CD4+ T cells.</title>
        <authorList>
            <person name="Li Y."/>
            <person name="Depontieu F.R."/>
            <person name="Sidney J."/>
            <person name="Salay T.M."/>
            <person name="Engelhard V.H."/>
            <person name="Hunt D.F."/>
            <person name="Sette A."/>
            <person name="Topalian S.L."/>
            <person name="Mariuzza R.A."/>
        </authorList>
    </citation>
    <scope>X-RAY CRYSTALLOGRAPHY (2.1 ANGSTROMS) OF 100-114 IN COMPLEX WITH HLA-DR1</scope>
    <scope>PHOSPHORYLATION AT SER-108</scope>
</reference>
<proteinExistence type="evidence at protein level"/>